<dbReference type="EC" id="2.1.2.1" evidence="1"/>
<dbReference type="EMBL" id="AE004092">
    <property type="protein sequence ID" value="AAK34017.1"/>
    <property type="molecule type" value="Genomic_DNA"/>
</dbReference>
<dbReference type="EMBL" id="CP000017">
    <property type="protein sequence ID" value="AAZ51485.1"/>
    <property type="molecule type" value="Genomic_DNA"/>
</dbReference>
<dbReference type="RefSeq" id="NP_269296.1">
    <property type="nucleotide sequence ID" value="NC_002737.2"/>
</dbReference>
<dbReference type="SMR" id="Q99ZP1"/>
<dbReference type="PaxDb" id="1314-HKU360_00929"/>
<dbReference type="KEGG" id="spy:SPy_1145"/>
<dbReference type="KEGG" id="spz:M5005_Spy0867"/>
<dbReference type="PATRIC" id="fig|160490.10.peg.998"/>
<dbReference type="HOGENOM" id="CLU_022477_2_1_9"/>
<dbReference type="OMA" id="CQFANVQ"/>
<dbReference type="UniPathway" id="UPA00193"/>
<dbReference type="UniPathway" id="UPA00288">
    <property type="reaction ID" value="UER01023"/>
</dbReference>
<dbReference type="Proteomes" id="UP000000750">
    <property type="component" value="Chromosome"/>
</dbReference>
<dbReference type="GO" id="GO:0005829">
    <property type="term" value="C:cytosol"/>
    <property type="evidence" value="ECO:0007669"/>
    <property type="project" value="TreeGrafter"/>
</dbReference>
<dbReference type="GO" id="GO:0004372">
    <property type="term" value="F:glycine hydroxymethyltransferase activity"/>
    <property type="evidence" value="ECO:0007669"/>
    <property type="project" value="UniProtKB-UniRule"/>
</dbReference>
<dbReference type="GO" id="GO:0030170">
    <property type="term" value="F:pyridoxal phosphate binding"/>
    <property type="evidence" value="ECO:0007669"/>
    <property type="project" value="UniProtKB-UniRule"/>
</dbReference>
<dbReference type="GO" id="GO:0019264">
    <property type="term" value="P:glycine biosynthetic process from serine"/>
    <property type="evidence" value="ECO:0007669"/>
    <property type="project" value="UniProtKB-UniRule"/>
</dbReference>
<dbReference type="GO" id="GO:0035999">
    <property type="term" value="P:tetrahydrofolate interconversion"/>
    <property type="evidence" value="ECO:0007669"/>
    <property type="project" value="UniProtKB-UniRule"/>
</dbReference>
<dbReference type="CDD" id="cd00378">
    <property type="entry name" value="SHMT"/>
    <property type="match status" value="1"/>
</dbReference>
<dbReference type="FunFam" id="3.40.640.10:FF:000001">
    <property type="entry name" value="Serine hydroxymethyltransferase"/>
    <property type="match status" value="1"/>
</dbReference>
<dbReference type="Gene3D" id="3.90.1150.10">
    <property type="entry name" value="Aspartate Aminotransferase, domain 1"/>
    <property type="match status" value="1"/>
</dbReference>
<dbReference type="Gene3D" id="3.40.640.10">
    <property type="entry name" value="Type I PLP-dependent aspartate aminotransferase-like (Major domain)"/>
    <property type="match status" value="1"/>
</dbReference>
<dbReference type="HAMAP" id="MF_00051">
    <property type="entry name" value="SHMT"/>
    <property type="match status" value="1"/>
</dbReference>
<dbReference type="InterPro" id="IPR015424">
    <property type="entry name" value="PyrdxlP-dep_Trfase"/>
</dbReference>
<dbReference type="InterPro" id="IPR015421">
    <property type="entry name" value="PyrdxlP-dep_Trfase_major"/>
</dbReference>
<dbReference type="InterPro" id="IPR015422">
    <property type="entry name" value="PyrdxlP-dep_Trfase_small"/>
</dbReference>
<dbReference type="InterPro" id="IPR001085">
    <property type="entry name" value="Ser_HO-MeTrfase"/>
</dbReference>
<dbReference type="InterPro" id="IPR049943">
    <property type="entry name" value="Ser_HO-MeTrfase-like"/>
</dbReference>
<dbReference type="InterPro" id="IPR019798">
    <property type="entry name" value="Ser_HO-MeTrfase_PLP_BS"/>
</dbReference>
<dbReference type="InterPro" id="IPR039429">
    <property type="entry name" value="SHMT-like_dom"/>
</dbReference>
<dbReference type="NCBIfam" id="NF000586">
    <property type="entry name" value="PRK00011.1"/>
    <property type="match status" value="1"/>
</dbReference>
<dbReference type="PANTHER" id="PTHR11680">
    <property type="entry name" value="SERINE HYDROXYMETHYLTRANSFERASE"/>
    <property type="match status" value="1"/>
</dbReference>
<dbReference type="PANTHER" id="PTHR11680:SF35">
    <property type="entry name" value="SERINE HYDROXYMETHYLTRANSFERASE 1"/>
    <property type="match status" value="1"/>
</dbReference>
<dbReference type="Pfam" id="PF00464">
    <property type="entry name" value="SHMT"/>
    <property type="match status" value="1"/>
</dbReference>
<dbReference type="PIRSF" id="PIRSF000412">
    <property type="entry name" value="SHMT"/>
    <property type="match status" value="1"/>
</dbReference>
<dbReference type="SUPFAM" id="SSF53383">
    <property type="entry name" value="PLP-dependent transferases"/>
    <property type="match status" value="1"/>
</dbReference>
<dbReference type="PROSITE" id="PS00096">
    <property type="entry name" value="SHMT"/>
    <property type="match status" value="1"/>
</dbReference>
<proteinExistence type="inferred from homology"/>
<keyword id="KW-0028">Amino-acid biosynthesis</keyword>
<keyword id="KW-0963">Cytoplasm</keyword>
<keyword id="KW-0554">One-carbon metabolism</keyword>
<keyword id="KW-0663">Pyridoxal phosphate</keyword>
<keyword id="KW-1185">Reference proteome</keyword>
<keyword id="KW-0808">Transferase</keyword>
<sequence length="418" mass="45096">MIFDKGNVEDFDKELWDAIHAEEERQEHHIELIASENMVSKAVMAAQGSVLTNKYAEGYPGNRYYGGTECVDIVETLAIERAKKLFGAAFANVQAHSGSQANAAAYMALIEAGDTVLGMDLAAGGHLTHGSPVNFSGKTYHFVGYSVDTDTEMLNYEAILEQAKAVQPKLIVAGASAYSRSIDFEKFRAIADHVGAYLMVDMAHIAGLVAAGVHPSPVPYAHIVTSTTHKTLRGPRGGLILTNDEALAKKINSAVFPGLQGGPLEHVIAAKAVAFKEALDPAFKDYAQAIIDNTAAMAAVFAQDDRFRLISGGTDNHVFLVDVTKVIANGKLAQNLLDEVNITLNKNAIPFETLSPFKTSGIRIGCAAITSRGMGVKESQTIARLIIKALVNHDQETILEEVRQEVRQLTDAFPLYKK</sequence>
<reference key="1">
    <citation type="journal article" date="2001" name="Proc. Natl. Acad. Sci. U.S.A.">
        <title>Complete genome sequence of an M1 strain of Streptococcus pyogenes.</title>
        <authorList>
            <person name="Ferretti J.J."/>
            <person name="McShan W.M."/>
            <person name="Ajdic D.J."/>
            <person name="Savic D.J."/>
            <person name="Savic G."/>
            <person name="Lyon K."/>
            <person name="Primeaux C."/>
            <person name="Sezate S."/>
            <person name="Suvorov A.N."/>
            <person name="Kenton S."/>
            <person name="Lai H.S."/>
            <person name="Lin S.P."/>
            <person name="Qian Y."/>
            <person name="Jia H.G."/>
            <person name="Najar F.Z."/>
            <person name="Ren Q."/>
            <person name="Zhu H."/>
            <person name="Song L."/>
            <person name="White J."/>
            <person name="Yuan X."/>
            <person name="Clifton S.W."/>
            <person name="Roe B.A."/>
            <person name="McLaughlin R.E."/>
        </authorList>
    </citation>
    <scope>NUCLEOTIDE SEQUENCE [LARGE SCALE GENOMIC DNA]</scope>
    <source>
        <strain>ATCC 700294 / SF370 / Serotype M1</strain>
    </source>
</reference>
<reference key="2">
    <citation type="journal article" date="2005" name="J. Infect. Dis.">
        <title>Evolutionary origin and emergence of a highly successful clone of serotype M1 group A Streptococcus involved multiple horizontal gene transfer events.</title>
        <authorList>
            <person name="Sumby P."/>
            <person name="Porcella S.F."/>
            <person name="Madrigal A.G."/>
            <person name="Barbian K.D."/>
            <person name="Virtaneva K."/>
            <person name="Ricklefs S.M."/>
            <person name="Sturdevant D.E."/>
            <person name="Graham M.R."/>
            <person name="Vuopio-Varkila J."/>
            <person name="Hoe N.P."/>
            <person name="Musser J.M."/>
        </authorList>
    </citation>
    <scope>NUCLEOTIDE SEQUENCE [LARGE SCALE GENOMIC DNA]</scope>
    <source>
        <strain>ATCC BAA-947 / MGAS5005 / Serotype M1</strain>
    </source>
</reference>
<name>GLYA_STRP1</name>
<evidence type="ECO:0000255" key="1">
    <source>
        <dbReference type="HAMAP-Rule" id="MF_00051"/>
    </source>
</evidence>
<protein>
    <recommendedName>
        <fullName evidence="1">Serine hydroxymethyltransferase</fullName>
        <shortName evidence="1">SHMT</shortName>
        <shortName evidence="1">Serine methylase</shortName>
        <ecNumber evidence="1">2.1.2.1</ecNumber>
    </recommendedName>
</protein>
<feature type="chain" id="PRO_0000113676" description="Serine hydroxymethyltransferase">
    <location>
        <begin position="1"/>
        <end position="418"/>
    </location>
</feature>
<feature type="binding site" evidence="1">
    <location>
        <position position="121"/>
    </location>
    <ligand>
        <name>(6S)-5,6,7,8-tetrahydrofolate</name>
        <dbReference type="ChEBI" id="CHEBI:57453"/>
    </ligand>
</feature>
<feature type="binding site" evidence="1">
    <location>
        <begin position="125"/>
        <end position="127"/>
    </location>
    <ligand>
        <name>(6S)-5,6,7,8-tetrahydrofolate</name>
        <dbReference type="ChEBI" id="CHEBI:57453"/>
    </ligand>
</feature>
<feature type="binding site" evidence="1">
    <location>
        <begin position="355"/>
        <end position="357"/>
    </location>
    <ligand>
        <name>(6S)-5,6,7,8-tetrahydrofolate</name>
        <dbReference type="ChEBI" id="CHEBI:57453"/>
    </ligand>
</feature>
<feature type="site" description="Plays an important role in substrate specificity" evidence="1">
    <location>
        <position position="229"/>
    </location>
</feature>
<feature type="modified residue" description="N6-(pyridoxal phosphate)lysine" evidence="1">
    <location>
        <position position="230"/>
    </location>
</feature>
<accession>Q99ZP1</accession>
<accession>Q48YT7</accession>
<organism>
    <name type="scientific">Streptococcus pyogenes serotype M1</name>
    <dbReference type="NCBI Taxonomy" id="301447"/>
    <lineage>
        <taxon>Bacteria</taxon>
        <taxon>Bacillati</taxon>
        <taxon>Bacillota</taxon>
        <taxon>Bacilli</taxon>
        <taxon>Lactobacillales</taxon>
        <taxon>Streptococcaceae</taxon>
        <taxon>Streptococcus</taxon>
    </lineage>
</organism>
<comment type="function">
    <text evidence="1">Catalyzes the reversible interconversion of serine and glycine with tetrahydrofolate (THF) serving as the one-carbon carrier. This reaction serves as the major source of one-carbon groups required for the biosynthesis of purines, thymidylate, methionine, and other important biomolecules. Also exhibits THF-independent aldolase activity toward beta-hydroxyamino acids, producing glycine and aldehydes, via a retro-aldol mechanism.</text>
</comment>
<comment type="catalytic activity">
    <reaction evidence="1">
        <text>(6R)-5,10-methylene-5,6,7,8-tetrahydrofolate + glycine + H2O = (6S)-5,6,7,8-tetrahydrofolate + L-serine</text>
        <dbReference type="Rhea" id="RHEA:15481"/>
        <dbReference type="ChEBI" id="CHEBI:15377"/>
        <dbReference type="ChEBI" id="CHEBI:15636"/>
        <dbReference type="ChEBI" id="CHEBI:33384"/>
        <dbReference type="ChEBI" id="CHEBI:57305"/>
        <dbReference type="ChEBI" id="CHEBI:57453"/>
        <dbReference type="EC" id="2.1.2.1"/>
    </reaction>
</comment>
<comment type="cofactor">
    <cofactor evidence="1">
        <name>pyridoxal 5'-phosphate</name>
        <dbReference type="ChEBI" id="CHEBI:597326"/>
    </cofactor>
</comment>
<comment type="pathway">
    <text evidence="1">One-carbon metabolism; tetrahydrofolate interconversion.</text>
</comment>
<comment type="pathway">
    <text evidence="1">Amino-acid biosynthesis; glycine biosynthesis; glycine from L-serine: step 1/1.</text>
</comment>
<comment type="subunit">
    <text evidence="1">Homodimer.</text>
</comment>
<comment type="subcellular location">
    <subcellularLocation>
        <location evidence="1">Cytoplasm</location>
    </subcellularLocation>
</comment>
<comment type="similarity">
    <text evidence="1">Belongs to the SHMT family.</text>
</comment>
<gene>
    <name evidence="1" type="primary">glyA</name>
    <name type="ordered locus">SPy_1145</name>
    <name type="ordered locus">M5005_Spy0867</name>
</gene>